<accession>Q4K550</accession>
<comment type="function">
    <text evidence="1">With S4 and S12 plays an important role in translational accuracy.</text>
</comment>
<comment type="function">
    <text evidence="1">Located at the back of the 30S subunit body where it stabilizes the conformation of the head with respect to the body.</text>
</comment>
<comment type="subunit">
    <text evidence="1">Part of the 30S ribosomal subunit. Contacts proteins S4 and S8.</text>
</comment>
<comment type="domain">
    <text>The N-terminal domain interacts with the head of the 30S subunit; the C-terminal domain interacts with the body and contacts protein S4. The interaction surface between S4 and S5 is involved in control of translational fidelity.</text>
</comment>
<comment type="similarity">
    <text evidence="1">Belongs to the universal ribosomal protein uS5 family.</text>
</comment>
<evidence type="ECO:0000255" key="1">
    <source>
        <dbReference type="HAMAP-Rule" id="MF_01307"/>
    </source>
</evidence>
<evidence type="ECO:0000305" key="2"/>
<proteinExistence type="inferred from homology"/>
<organism>
    <name type="scientific">Pseudomonas fluorescens (strain ATCC BAA-477 / NRRL B-23932 / Pf-5)</name>
    <dbReference type="NCBI Taxonomy" id="220664"/>
    <lineage>
        <taxon>Bacteria</taxon>
        <taxon>Pseudomonadati</taxon>
        <taxon>Pseudomonadota</taxon>
        <taxon>Gammaproteobacteria</taxon>
        <taxon>Pseudomonadales</taxon>
        <taxon>Pseudomonadaceae</taxon>
        <taxon>Pseudomonas</taxon>
    </lineage>
</organism>
<protein>
    <recommendedName>
        <fullName evidence="1">Small ribosomal subunit protein uS5</fullName>
    </recommendedName>
    <alternativeName>
        <fullName evidence="2">30S ribosomal protein S5</fullName>
    </alternativeName>
</protein>
<reference key="1">
    <citation type="journal article" date="2005" name="Nat. Biotechnol.">
        <title>Complete genome sequence of the plant commensal Pseudomonas fluorescens Pf-5.</title>
        <authorList>
            <person name="Paulsen I.T."/>
            <person name="Press C.M."/>
            <person name="Ravel J."/>
            <person name="Kobayashi D.Y."/>
            <person name="Myers G.S.A."/>
            <person name="Mavrodi D.V."/>
            <person name="DeBoy R.T."/>
            <person name="Seshadri R."/>
            <person name="Ren Q."/>
            <person name="Madupu R."/>
            <person name="Dodson R.J."/>
            <person name="Durkin A.S."/>
            <person name="Brinkac L.M."/>
            <person name="Daugherty S.C."/>
            <person name="Sullivan S.A."/>
            <person name="Rosovitz M.J."/>
            <person name="Gwinn M.L."/>
            <person name="Zhou L."/>
            <person name="Schneider D.J."/>
            <person name="Cartinhour S.W."/>
            <person name="Nelson W.C."/>
            <person name="Weidman J."/>
            <person name="Watkins K."/>
            <person name="Tran K."/>
            <person name="Khouri H."/>
            <person name="Pierson E.A."/>
            <person name="Pierson L.S. III"/>
            <person name="Thomashow L.S."/>
            <person name="Loper J.E."/>
        </authorList>
    </citation>
    <scope>NUCLEOTIDE SEQUENCE [LARGE SCALE GENOMIC DNA]</scope>
    <source>
        <strain>ATCC BAA-477 / NRRL B-23932 / Pf-5</strain>
    </source>
</reference>
<feature type="chain" id="PRO_0000230360" description="Small ribosomal subunit protein uS5">
    <location>
        <begin position="1"/>
        <end position="166"/>
    </location>
</feature>
<feature type="domain" description="S5 DRBM" evidence="1">
    <location>
        <begin position="12"/>
        <end position="75"/>
    </location>
</feature>
<gene>
    <name evidence="1" type="primary">rpsE</name>
    <name type="ordered locus">PFL_5565</name>
</gene>
<dbReference type="EMBL" id="CP000076">
    <property type="protein sequence ID" value="AAY94770.1"/>
    <property type="molecule type" value="Genomic_DNA"/>
</dbReference>
<dbReference type="RefSeq" id="WP_007924184.1">
    <property type="nucleotide sequence ID" value="NC_004129.6"/>
</dbReference>
<dbReference type="SMR" id="Q4K550"/>
<dbReference type="STRING" id="220664.PFL_5565"/>
<dbReference type="GeneID" id="93406131"/>
<dbReference type="KEGG" id="pfl:PFL_5565"/>
<dbReference type="eggNOG" id="COG0098">
    <property type="taxonomic scope" value="Bacteria"/>
</dbReference>
<dbReference type="HOGENOM" id="CLU_065898_2_2_6"/>
<dbReference type="Proteomes" id="UP000008540">
    <property type="component" value="Chromosome"/>
</dbReference>
<dbReference type="GO" id="GO:0015935">
    <property type="term" value="C:small ribosomal subunit"/>
    <property type="evidence" value="ECO:0007669"/>
    <property type="project" value="InterPro"/>
</dbReference>
<dbReference type="GO" id="GO:0019843">
    <property type="term" value="F:rRNA binding"/>
    <property type="evidence" value="ECO:0007669"/>
    <property type="project" value="UniProtKB-UniRule"/>
</dbReference>
<dbReference type="GO" id="GO:0003735">
    <property type="term" value="F:structural constituent of ribosome"/>
    <property type="evidence" value="ECO:0007669"/>
    <property type="project" value="InterPro"/>
</dbReference>
<dbReference type="GO" id="GO:0006412">
    <property type="term" value="P:translation"/>
    <property type="evidence" value="ECO:0007669"/>
    <property type="project" value="UniProtKB-UniRule"/>
</dbReference>
<dbReference type="FunFam" id="3.30.160.20:FF:000001">
    <property type="entry name" value="30S ribosomal protein S5"/>
    <property type="match status" value="1"/>
</dbReference>
<dbReference type="FunFam" id="3.30.230.10:FF:000002">
    <property type="entry name" value="30S ribosomal protein S5"/>
    <property type="match status" value="1"/>
</dbReference>
<dbReference type="Gene3D" id="3.30.160.20">
    <property type="match status" value="1"/>
</dbReference>
<dbReference type="Gene3D" id="3.30.230.10">
    <property type="match status" value="1"/>
</dbReference>
<dbReference type="HAMAP" id="MF_01307_B">
    <property type="entry name" value="Ribosomal_uS5_B"/>
    <property type="match status" value="1"/>
</dbReference>
<dbReference type="InterPro" id="IPR020568">
    <property type="entry name" value="Ribosomal_Su5_D2-typ_SF"/>
</dbReference>
<dbReference type="InterPro" id="IPR000851">
    <property type="entry name" value="Ribosomal_uS5"/>
</dbReference>
<dbReference type="InterPro" id="IPR005712">
    <property type="entry name" value="Ribosomal_uS5_bac-type"/>
</dbReference>
<dbReference type="InterPro" id="IPR005324">
    <property type="entry name" value="Ribosomal_uS5_C"/>
</dbReference>
<dbReference type="InterPro" id="IPR013810">
    <property type="entry name" value="Ribosomal_uS5_N"/>
</dbReference>
<dbReference type="InterPro" id="IPR018192">
    <property type="entry name" value="Ribosomal_uS5_N_CS"/>
</dbReference>
<dbReference type="InterPro" id="IPR014721">
    <property type="entry name" value="Ribsml_uS5_D2-typ_fold_subgr"/>
</dbReference>
<dbReference type="NCBIfam" id="TIGR01021">
    <property type="entry name" value="rpsE_bact"/>
    <property type="match status" value="1"/>
</dbReference>
<dbReference type="PANTHER" id="PTHR48432">
    <property type="entry name" value="S5 DRBM DOMAIN-CONTAINING PROTEIN"/>
    <property type="match status" value="1"/>
</dbReference>
<dbReference type="PANTHER" id="PTHR48432:SF1">
    <property type="entry name" value="S5 DRBM DOMAIN-CONTAINING PROTEIN"/>
    <property type="match status" value="1"/>
</dbReference>
<dbReference type="Pfam" id="PF00333">
    <property type="entry name" value="Ribosomal_S5"/>
    <property type="match status" value="1"/>
</dbReference>
<dbReference type="Pfam" id="PF03719">
    <property type="entry name" value="Ribosomal_S5_C"/>
    <property type="match status" value="1"/>
</dbReference>
<dbReference type="SUPFAM" id="SSF54768">
    <property type="entry name" value="dsRNA-binding domain-like"/>
    <property type="match status" value="1"/>
</dbReference>
<dbReference type="SUPFAM" id="SSF54211">
    <property type="entry name" value="Ribosomal protein S5 domain 2-like"/>
    <property type="match status" value="1"/>
</dbReference>
<dbReference type="PROSITE" id="PS00585">
    <property type="entry name" value="RIBOSOMAL_S5"/>
    <property type="match status" value="1"/>
</dbReference>
<dbReference type="PROSITE" id="PS50881">
    <property type="entry name" value="S5_DSRBD"/>
    <property type="match status" value="1"/>
</dbReference>
<sequence>MSNNDQKRDEGYIEKLVQVNRVAKTVKGGRIFTFTALTVVGDGKGRVGFGRGKSREVPAAIQKAMEAARRNMIQVDLNGTTLQYAMKSAHGASKVYMQPASEGTGIIAGGAMRAVLEVAGVQNVLAKCYGSTNPVNVVHATFKGLKAMQSPESIAAKRGKSVQEII</sequence>
<name>RS5_PSEF5</name>
<keyword id="KW-0687">Ribonucleoprotein</keyword>
<keyword id="KW-0689">Ribosomal protein</keyword>
<keyword id="KW-0694">RNA-binding</keyword>
<keyword id="KW-0699">rRNA-binding</keyword>